<feature type="chain" id="PRO_0000078359" description="Heat shock 70 kDa protein">
    <location>
        <begin position="1"/>
        <end position="705"/>
    </location>
</feature>
<feature type="region of interest" description="Disordered" evidence="1">
    <location>
        <begin position="624"/>
        <end position="645"/>
    </location>
</feature>
<feature type="compositionally biased region" description="Gly residues" evidence="1">
    <location>
        <begin position="624"/>
        <end position="644"/>
    </location>
</feature>
<reference key="1">
    <citation type="journal article" date="1996" name="Infect. Immun.">
        <title>Cellular immune responses to recombinant heat shock protein 70 from Histoplasma capsulatum.</title>
        <authorList>
            <person name="Allendoerfer R."/>
            <person name="Maresca B."/>
            <person name="Deepe G.S. Jr."/>
        </authorList>
    </citation>
    <scope>NUCLEOTIDE SEQUENCE [GENOMIC DNA]</scope>
    <source>
        <strain>ATCC 26034 / G222B</strain>
    </source>
</reference>
<keyword id="KW-0067">ATP-binding</keyword>
<keyword id="KW-0143">Chaperone</keyword>
<keyword id="KW-0547">Nucleotide-binding</keyword>
<keyword id="KW-0346">Stress response</keyword>
<gene>
    <name type="primary">HSP70</name>
</gene>
<name>HSP70_AJECA</name>
<proteinExistence type="inferred from homology"/>
<evidence type="ECO:0000256" key="1">
    <source>
        <dbReference type="SAM" id="MobiDB-lite"/>
    </source>
</evidence>
<evidence type="ECO:0000305" key="2"/>
<comment type="similarity">
    <text evidence="2">Belongs to the heat shock protein 70 family.</text>
</comment>
<accession>Q00043</accession>
<sequence>MAPAVGIDLGTTYSCVGIFRDDRIEIIANDQGNRTTPSFVAFTDTERLIGDAAKNQVAMNPANTVFDAKRLIGRKFADPEVQADMKHFPFKITDKGGKPVIQVEFKGETKEFTPEEISSMVLTKMRETAEAYLGGTVNNAVVTVPAYFNDSQRQATKDAGLIAGLNVLRIINEPTAAAIAYGLDKKADGERNVLIFDLGGGTFDVSLLTIEEGIFEVKSTAGDTHLGGEDFDNRLVNHFVSEFKRKFKKISPAERARALRRSPTACERAKRTLSSAAQTSIEIDSLYEGIDFYTSITRARFEELCQDLFRSTMEPVERVLRDAKIDKSSVHEIVLVGGSTRIPRIQKLVSDFFNGKEPNKSINPDEAVAYGAAVQAAILSGDTSSKSTNEILLLDVAPLSLGIETAGGVMTPLIKRNTTIPTKKSETFSTFSDNQPGVLIQVFEGERARTKDNNLLGKFELTGIPRARGVPQIEVTFDVDANGIMNVSALEKGTRKTNKIVITNDKGRLSKEEIERMLAEAEKYKAEDEAEASRIRPKNGLESYAYSLRNSLRHSKVDEKLEAGDKEKLKSEIDKTVQWLDENQTATKEEYESQQKELEAVANPIMMKFYAGGEGAPGGFPGAGGPGGFPGGPGAGHASGGGDDGPTVEEVDLKFPMLPLPWQLSVRKMHRPFFLFLLFLIFLIFLILFLFYFFLPVRFNESCFS</sequence>
<protein>
    <recommendedName>
        <fullName>Heat shock 70 kDa protein</fullName>
    </recommendedName>
</protein>
<organism>
    <name type="scientific">Ajellomyces capsulatus</name>
    <name type="common">Darling's disease fungus</name>
    <name type="synonym">Histoplasma capsulatum</name>
    <dbReference type="NCBI Taxonomy" id="5037"/>
    <lineage>
        <taxon>Eukaryota</taxon>
        <taxon>Fungi</taxon>
        <taxon>Dikarya</taxon>
        <taxon>Ascomycota</taxon>
        <taxon>Pezizomycotina</taxon>
        <taxon>Eurotiomycetes</taxon>
        <taxon>Eurotiomycetidae</taxon>
        <taxon>Onygenales</taxon>
        <taxon>Ajellomycetaceae</taxon>
        <taxon>Histoplasma</taxon>
    </lineage>
</organism>
<dbReference type="EMBL" id="U46464">
    <property type="protein sequence ID" value="AAC05418.1"/>
    <property type="molecule type" value="Genomic_DNA"/>
</dbReference>
<dbReference type="SMR" id="Q00043"/>
<dbReference type="GO" id="GO:0005737">
    <property type="term" value="C:cytoplasm"/>
    <property type="evidence" value="ECO:0000314"/>
    <property type="project" value="CAFA"/>
</dbReference>
<dbReference type="GO" id="GO:0009277">
    <property type="term" value="C:fungal-type cell wall"/>
    <property type="evidence" value="ECO:0000314"/>
    <property type="project" value="CAFA"/>
</dbReference>
<dbReference type="GO" id="GO:0005524">
    <property type="term" value="F:ATP binding"/>
    <property type="evidence" value="ECO:0007669"/>
    <property type="project" value="UniProtKB-KW"/>
</dbReference>
<dbReference type="GO" id="GO:0140662">
    <property type="term" value="F:ATP-dependent protein folding chaperone"/>
    <property type="evidence" value="ECO:0007669"/>
    <property type="project" value="InterPro"/>
</dbReference>
<dbReference type="CDD" id="cd10233">
    <property type="entry name" value="ASKHA_NBD_HSP70_HSPA1"/>
    <property type="match status" value="1"/>
</dbReference>
<dbReference type="FunFam" id="2.60.34.10:FF:000002">
    <property type="entry name" value="Heat shock 70 kDa"/>
    <property type="match status" value="1"/>
</dbReference>
<dbReference type="FunFam" id="3.90.640.10:FF:000002">
    <property type="entry name" value="Heat shock 70 kDa"/>
    <property type="match status" value="1"/>
</dbReference>
<dbReference type="FunFam" id="3.30.420.40:FF:000172">
    <property type="entry name" value="Heat shock 70 kDa protein"/>
    <property type="match status" value="2"/>
</dbReference>
<dbReference type="FunFam" id="3.30.30.30:FF:000001">
    <property type="entry name" value="heat shock 70 kDa protein-like"/>
    <property type="match status" value="1"/>
</dbReference>
<dbReference type="FunFam" id="3.30.420.40:FF:000028">
    <property type="entry name" value="heat shock 70 kDa protein-like"/>
    <property type="match status" value="1"/>
</dbReference>
<dbReference type="FunFam" id="1.20.1270.10:FF:000021">
    <property type="entry name" value="Heat shock protein 70"/>
    <property type="match status" value="1"/>
</dbReference>
<dbReference type="FunFam" id="3.30.420.40:FF:000026">
    <property type="entry name" value="Heat shock protein 70"/>
    <property type="match status" value="1"/>
</dbReference>
<dbReference type="Gene3D" id="1.20.1270.10">
    <property type="match status" value="1"/>
</dbReference>
<dbReference type="Gene3D" id="3.30.30.30">
    <property type="match status" value="1"/>
</dbReference>
<dbReference type="Gene3D" id="3.30.420.40">
    <property type="match status" value="2"/>
</dbReference>
<dbReference type="Gene3D" id="3.90.640.10">
    <property type="entry name" value="Actin, Chain A, domain 4"/>
    <property type="match status" value="1"/>
</dbReference>
<dbReference type="Gene3D" id="2.60.34.10">
    <property type="entry name" value="Substrate Binding Domain Of DNAk, Chain A, domain 1"/>
    <property type="match status" value="1"/>
</dbReference>
<dbReference type="InterPro" id="IPR043129">
    <property type="entry name" value="ATPase_NBD"/>
</dbReference>
<dbReference type="InterPro" id="IPR018181">
    <property type="entry name" value="Heat_shock_70_CS"/>
</dbReference>
<dbReference type="InterPro" id="IPR029048">
    <property type="entry name" value="HSP70_C_sf"/>
</dbReference>
<dbReference type="InterPro" id="IPR029047">
    <property type="entry name" value="HSP70_peptide-bd_sf"/>
</dbReference>
<dbReference type="InterPro" id="IPR013126">
    <property type="entry name" value="Hsp_70_fam"/>
</dbReference>
<dbReference type="NCBIfam" id="NF001413">
    <property type="entry name" value="PRK00290.1"/>
    <property type="match status" value="1"/>
</dbReference>
<dbReference type="PANTHER" id="PTHR19375">
    <property type="entry name" value="HEAT SHOCK PROTEIN 70KDA"/>
    <property type="match status" value="1"/>
</dbReference>
<dbReference type="Pfam" id="PF00012">
    <property type="entry name" value="HSP70"/>
    <property type="match status" value="1"/>
</dbReference>
<dbReference type="PRINTS" id="PR00301">
    <property type="entry name" value="HEATSHOCK70"/>
</dbReference>
<dbReference type="SUPFAM" id="SSF53067">
    <property type="entry name" value="Actin-like ATPase domain"/>
    <property type="match status" value="2"/>
</dbReference>
<dbReference type="SUPFAM" id="SSF100934">
    <property type="entry name" value="Heat shock protein 70kD (HSP70), C-terminal subdomain"/>
    <property type="match status" value="1"/>
</dbReference>
<dbReference type="SUPFAM" id="SSF100920">
    <property type="entry name" value="Heat shock protein 70kD (HSP70), peptide-binding domain"/>
    <property type="match status" value="1"/>
</dbReference>
<dbReference type="PROSITE" id="PS00297">
    <property type="entry name" value="HSP70_1"/>
    <property type="match status" value="1"/>
</dbReference>
<dbReference type="PROSITE" id="PS00329">
    <property type="entry name" value="HSP70_2"/>
    <property type="match status" value="1"/>
</dbReference>
<dbReference type="PROSITE" id="PS01036">
    <property type="entry name" value="HSP70_3"/>
    <property type="match status" value="1"/>
</dbReference>